<accession>P01944</accession>
<evidence type="ECO:0000250" key="1">
    <source>
        <dbReference type="UniProtKB" id="P01942"/>
    </source>
</evidence>
<evidence type="ECO:0000250" key="2">
    <source>
        <dbReference type="UniProtKB" id="P01946"/>
    </source>
</evidence>
<evidence type="ECO:0000250" key="3">
    <source>
        <dbReference type="UniProtKB" id="P69905"/>
    </source>
</evidence>
<evidence type="ECO:0000255" key="4">
    <source>
        <dbReference type="PROSITE-ProRule" id="PRU00238"/>
    </source>
</evidence>
<reference key="1">
    <citation type="journal article" date="1983" name="Hoppe-Seyler's Z. Physiol. Chem.">
        <title>Primary structure of hemoglobins of the musk rat (Ondatra zibethica, Rodentia).</title>
        <authorList>
            <person name="Bieber F.A."/>
            <person name="Braunitzer G."/>
        </authorList>
    </citation>
    <scope>PROTEIN SEQUENCE</scope>
</reference>
<protein>
    <recommendedName>
        <fullName>Hemoglobin subunit alpha</fullName>
    </recommendedName>
    <alternativeName>
        <fullName>Alpha-globin</fullName>
    </alternativeName>
    <alternativeName>
        <fullName>Hemoglobin alpha chain</fullName>
    </alternativeName>
    <component>
        <recommendedName>
            <fullName evidence="2">Hemopressin</fullName>
        </recommendedName>
    </component>
</protein>
<name>HBA_ONDZI</name>
<organism>
    <name type="scientific">Ondatra zibethicus</name>
    <name type="common">Muskrat</name>
    <dbReference type="NCBI Taxonomy" id="10060"/>
    <lineage>
        <taxon>Eukaryota</taxon>
        <taxon>Metazoa</taxon>
        <taxon>Chordata</taxon>
        <taxon>Craniata</taxon>
        <taxon>Vertebrata</taxon>
        <taxon>Euteleostomi</taxon>
        <taxon>Mammalia</taxon>
        <taxon>Eutheria</taxon>
        <taxon>Euarchontoglires</taxon>
        <taxon>Glires</taxon>
        <taxon>Rodentia</taxon>
        <taxon>Myomorpha</taxon>
        <taxon>Muroidea</taxon>
        <taxon>Cricetidae</taxon>
        <taxon>Arvicolinae</taxon>
        <taxon>Ondatra</taxon>
    </lineage>
</organism>
<dbReference type="PIR" id="A02266">
    <property type="entry name" value="HAOZ"/>
</dbReference>
<dbReference type="SMR" id="P01944"/>
<dbReference type="GO" id="GO:0072562">
    <property type="term" value="C:blood microparticle"/>
    <property type="evidence" value="ECO:0007669"/>
    <property type="project" value="TreeGrafter"/>
</dbReference>
<dbReference type="GO" id="GO:0031838">
    <property type="term" value="C:haptoglobin-hemoglobin complex"/>
    <property type="evidence" value="ECO:0007669"/>
    <property type="project" value="TreeGrafter"/>
</dbReference>
<dbReference type="GO" id="GO:0005833">
    <property type="term" value="C:hemoglobin complex"/>
    <property type="evidence" value="ECO:0007669"/>
    <property type="project" value="InterPro"/>
</dbReference>
<dbReference type="GO" id="GO:0031720">
    <property type="term" value="F:haptoglobin binding"/>
    <property type="evidence" value="ECO:0007669"/>
    <property type="project" value="TreeGrafter"/>
</dbReference>
<dbReference type="GO" id="GO:0020037">
    <property type="term" value="F:heme binding"/>
    <property type="evidence" value="ECO:0007669"/>
    <property type="project" value="InterPro"/>
</dbReference>
<dbReference type="GO" id="GO:0005506">
    <property type="term" value="F:iron ion binding"/>
    <property type="evidence" value="ECO:0007669"/>
    <property type="project" value="InterPro"/>
</dbReference>
<dbReference type="GO" id="GO:0043177">
    <property type="term" value="F:organic acid binding"/>
    <property type="evidence" value="ECO:0007669"/>
    <property type="project" value="TreeGrafter"/>
</dbReference>
<dbReference type="GO" id="GO:0019825">
    <property type="term" value="F:oxygen binding"/>
    <property type="evidence" value="ECO:0007669"/>
    <property type="project" value="InterPro"/>
</dbReference>
<dbReference type="GO" id="GO:0005344">
    <property type="term" value="F:oxygen carrier activity"/>
    <property type="evidence" value="ECO:0007669"/>
    <property type="project" value="UniProtKB-KW"/>
</dbReference>
<dbReference type="GO" id="GO:0004601">
    <property type="term" value="F:peroxidase activity"/>
    <property type="evidence" value="ECO:0007669"/>
    <property type="project" value="TreeGrafter"/>
</dbReference>
<dbReference type="GO" id="GO:0042744">
    <property type="term" value="P:hydrogen peroxide catabolic process"/>
    <property type="evidence" value="ECO:0007669"/>
    <property type="project" value="TreeGrafter"/>
</dbReference>
<dbReference type="CDD" id="cd08927">
    <property type="entry name" value="Hb-alpha-like"/>
    <property type="match status" value="1"/>
</dbReference>
<dbReference type="FunFam" id="1.10.490.10:FF:000002">
    <property type="entry name" value="Hemoglobin subunit alpha"/>
    <property type="match status" value="1"/>
</dbReference>
<dbReference type="Gene3D" id="1.10.490.10">
    <property type="entry name" value="Globins"/>
    <property type="match status" value="1"/>
</dbReference>
<dbReference type="InterPro" id="IPR000971">
    <property type="entry name" value="Globin"/>
</dbReference>
<dbReference type="InterPro" id="IPR009050">
    <property type="entry name" value="Globin-like_sf"/>
</dbReference>
<dbReference type="InterPro" id="IPR012292">
    <property type="entry name" value="Globin/Proto"/>
</dbReference>
<dbReference type="InterPro" id="IPR002338">
    <property type="entry name" value="Hemoglobin_a-typ"/>
</dbReference>
<dbReference type="InterPro" id="IPR050056">
    <property type="entry name" value="Hemoglobin_oxygen_transport"/>
</dbReference>
<dbReference type="InterPro" id="IPR002339">
    <property type="entry name" value="Hemoglobin_pi"/>
</dbReference>
<dbReference type="PANTHER" id="PTHR11442">
    <property type="entry name" value="HEMOGLOBIN FAMILY MEMBER"/>
    <property type="match status" value="1"/>
</dbReference>
<dbReference type="PANTHER" id="PTHR11442:SF48">
    <property type="entry name" value="HEMOGLOBIN SUBUNIT ALPHA"/>
    <property type="match status" value="1"/>
</dbReference>
<dbReference type="Pfam" id="PF00042">
    <property type="entry name" value="Globin"/>
    <property type="match status" value="1"/>
</dbReference>
<dbReference type="PRINTS" id="PR00612">
    <property type="entry name" value="ALPHAHAEM"/>
</dbReference>
<dbReference type="PRINTS" id="PR00815">
    <property type="entry name" value="PIHAEM"/>
</dbReference>
<dbReference type="SUPFAM" id="SSF46458">
    <property type="entry name" value="Globin-like"/>
    <property type="match status" value="1"/>
</dbReference>
<dbReference type="PROSITE" id="PS01033">
    <property type="entry name" value="GLOBIN"/>
    <property type="match status" value="1"/>
</dbReference>
<sequence length="141" mass="15156">VLSGEDKNNIKTAWGKIGGHAAEYGAEALERMFVVYPTTKTYFPHFDVSHGSGQVKAHGKKVADALTTAVGHLDDLPGALSALSDLHAHKLRVDPVNFKLLSHCLLVTLANHIPADFTPAVHASLDKFLASVSTVLTSKYR</sequence>
<feature type="chain" id="PRO_0000052709" description="Hemoglobin subunit alpha">
    <location>
        <begin position="1"/>
        <end position="141"/>
    </location>
</feature>
<feature type="peptide" id="PRO_0000455911" description="Hemopressin" evidence="2">
    <location>
        <begin position="95"/>
        <end position="103"/>
    </location>
</feature>
<feature type="domain" description="Globin" evidence="4">
    <location>
        <begin position="1"/>
        <end position="141"/>
    </location>
</feature>
<feature type="binding site" evidence="4">
    <location>
        <position position="58"/>
    </location>
    <ligand>
        <name>O2</name>
        <dbReference type="ChEBI" id="CHEBI:15379"/>
    </ligand>
</feature>
<feature type="binding site" description="proximal binding residue" evidence="4">
    <location>
        <position position="87"/>
    </location>
    <ligand>
        <name>heme b</name>
        <dbReference type="ChEBI" id="CHEBI:60344"/>
    </ligand>
    <ligandPart>
        <name>Fe</name>
        <dbReference type="ChEBI" id="CHEBI:18248"/>
    </ligandPart>
</feature>
<feature type="modified residue" description="Phosphoserine" evidence="3">
    <location>
        <position position="3"/>
    </location>
</feature>
<feature type="modified residue" description="N6-succinyllysine" evidence="1">
    <location>
        <position position="7"/>
    </location>
</feature>
<feature type="modified residue" description="N6-succinyllysine" evidence="1">
    <location>
        <position position="11"/>
    </location>
</feature>
<feature type="modified residue" description="N6-acetyllysine; alternate" evidence="3">
    <location>
        <position position="16"/>
    </location>
</feature>
<feature type="modified residue" description="N6-succinyllysine; alternate" evidence="1">
    <location>
        <position position="16"/>
    </location>
</feature>
<feature type="modified residue" description="Phosphotyrosine" evidence="3">
    <location>
        <position position="24"/>
    </location>
</feature>
<feature type="modified residue" description="N6-succinyllysine" evidence="1">
    <location>
        <position position="40"/>
    </location>
</feature>
<feature type="modified residue" description="Phosphoserine" evidence="3">
    <location>
        <position position="49"/>
    </location>
</feature>
<feature type="modified residue" description="Phosphoserine" evidence="1">
    <location>
        <position position="102"/>
    </location>
</feature>
<feature type="modified residue" description="Phosphothreonine" evidence="1">
    <location>
        <position position="108"/>
    </location>
</feature>
<feature type="modified residue" description="Phosphoserine" evidence="1">
    <location>
        <position position="124"/>
    </location>
</feature>
<feature type="modified residue" description="Phosphoserine" evidence="1">
    <location>
        <position position="131"/>
    </location>
</feature>
<feature type="modified residue" description="Phosphothreonine" evidence="1">
    <location>
        <position position="134"/>
    </location>
</feature>
<feature type="modified residue" description="Phosphothreonine" evidence="1">
    <location>
        <position position="137"/>
    </location>
</feature>
<feature type="modified residue" description="Phosphoserine" evidence="1">
    <location>
        <position position="138"/>
    </location>
</feature>
<keyword id="KW-0007">Acetylation</keyword>
<keyword id="KW-0903">Direct protein sequencing</keyword>
<keyword id="KW-0349">Heme</keyword>
<keyword id="KW-0408">Iron</keyword>
<keyword id="KW-0479">Metal-binding</keyword>
<keyword id="KW-0561">Oxygen transport</keyword>
<keyword id="KW-0597">Phosphoprotein</keyword>
<keyword id="KW-0813">Transport</keyword>
<proteinExistence type="evidence at protein level"/>
<comment type="function">
    <text>Involved in oxygen transport from the lung to the various peripheral tissues.</text>
</comment>
<comment type="function">
    <molecule>Hemopressin</molecule>
    <text evidence="2">Hemopressin acts as an antagonist peptide of the cannabinoid receptor CNR1. Hemopressin-binding efficiently blocks cannabinoid receptor CNR1 and subsequent signaling.</text>
</comment>
<comment type="subunit">
    <text>Heterotetramer of two alpha chains and two beta chains.</text>
</comment>
<comment type="tissue specificity">
    <text>Red blood cells.</text>
</comment>
<comment type="similarity">
    <text evidence="4">Belongs to the globin family.</text>
</comment>
<gene>
    <name type="primary">HBA</name>
</gene>